<evidence type="ECO:0000250" key="1">
    <source>
        <dbReference type="UniProtKB" id="Q4WZB3"/>
    </source>
</evidence>
<evidence type="ECO:0000250" key="2">
    <source>
        <dbReference type="UniProtKB" id="Q93NG6"/>
    </source>
</evidence>
<evidence type="ECO:0000269" key="3">
    <source>
    </source>
</evidence>
<evidence type="ECO:0000303" key="4">
    <source>
    </source>
</evidence>
<evidence type="ECO:0000305" key="5"/>
<evidence type="ECO:0000305" key="6">
    <source>
    </source>
</evidence>
<reference key="1">
    <citation type="journal article" date="2018" name="J. Am. Chem. Soc.">
        <title>Genome mining and assembly-line biosynthesis of the UCS1025A pyrrolizidinone family of fungal alkaloids.</title>
        <authorList>
            <person name="Li L."/>
            <person name="Tang M.C."/>
            <person name="Tang S."/>
            <person name="Gao S."/>
            <person name="Soliman S."/>
            <person name="Hang L."/>
            <person name="Xu W."/>
            <person name="Ye T."/>
            <person name="Watanabe K."/>
            <person name="Tang Y."/>
        </authorList>
    </citation>
    <scope>NUCLEOTIDE SEQUENCE [GENOMIC DNA]</scope>
    <scope>FUNCTION</scope>
    <scope>PATHWAY</scope>
    <source>
        <strain>KY4917</strain>
    </source>
</reference>
<gene>
    <name evidence="4" type="primary">ucsC</name>
</gene>
<name>UCSC_ACRSP</name>
<dbReference type="EC" id="3.7.1.-" evidence="6"/>
<dbReference type="EMBL" id="MH375766">
    <property type="protein sequence ID" value="QBC88147.1"/>
    <property type="molecule type" value="Genomic_DNA"/>
</dbReference>
<dbReference type="SMR" id="A0A411KUP9"/>
<dbReference type="ESTHER" id="acrsp-ucsc">
    <property type="family name" value="Duf_1100-S"/>
</dbReference>
<dbReference type="GO" id="GO:0016787">
    <property type="term" value="F:hydrolase activity"/>
    <property type="evidence" value="ECO:0007669"/>
    <property type="project" value="UniProtKB-KW"/>
</dbReference>
<dbReference type="Gene3D" id="1.20.1440.110">
    <property type="entry name" value="acylaminoacyl peptidase"/>
    <property type="match status" value="1"/>
</dbReference>
<dbReference type="Gene3D" id="3.40.50.1820">
    <property type="entry name" value="alpha/beta hydrolase"/>
    <property type="match status" value="1"/>
</dbReference>
<dbReference type="InterPro" id="IPR000073">
    <property type="entry name" value="AB_hydrolase_1"/>
</dbReference>
<dbReference type="InterPro" id="IPR029058">
    <property type="entry name" value="AB_hydrolase_fold"/>
</dbReference>
<dbReference type="InterPro" id="IPR050261">
    <property type="entry name" value="FrsA_esterase"/>
</dbReference>
<dbReference type="PANTHER" id="PTHR22946:SF13">
    <property type="entry name" value="ALPHA_BETA HYDROLASE PSOB"/>
    <property type="match status" value="1"/>
</dbReference>
<dbReference type="PANTHER" id="PTHR22946">
    <property type="entry name" value="DIENELACTONE HYDROLASE DOMAIN-CONTAINING PROTEIN-RELATED"/>
    <property type="match status" value="1"/>
</dbReference>
<dbReference type="Pfam" id="PF12697">
    <property type="entry name" value="Abhydrolase_6"/>
    <property type="match status" value="1"/>
</dbReference>
<dbReference type="SUPFAM" id="SSF53474">
    <property type="entry name" value="alpha/beta-Hydrolases"/>
    <property type="match status" value="1"/>
</dbReference>
<comment type="function">
    <text evidence="3 6">Alpha/beta hydrolase; part of the gene cluster that mediates the biosynthesis of UCS1025A, a member of the pyrrolizidinone family that acts as a strong telomerase inhibitor and displays potent antibacterial and antitumor properties (PubMed:29373009). These compounds share a hemiaminal-containing pyrrolizidinone core fused with a gamma-lactone, giving a furopyrrolizidine that is connected to a decalin fragment (PubMed:29373009). The polyketide synthase module (PKS) of the PKS-NRPS ucsA is responsible for the synthesis of the polyketide backbone via the condensation of an acetyl-CoA starter unit with 6 malonyl-CoA units (PubMed:29373009). The downstream nonribosomal peptide synthetase (NRPS) module then amidates the carboxyl end of the polyketide with a 2S,3S-methylproline derived from L-isoleucine by the 2-oxoglutarate-dependent dioxygenase ucsF which converts L-isoleucine to (4S,5S)-4-methylpyrroline-5-carboxylate that is further converted to 2S,3S-methylproline by the pyrroline-5-carboxylate reductase ucsG (PubMed:29373009). Reductive release of the completed aminoacyl polyketide from the assembly line can form the 3-pyrrolin-2-one structure via an intramolecular Knoevenagel reaction (PubMed:29373009). Because ucsA lacks a designated enoylreductase (ER) domain, the required activity is provided the enoyl reductase ucsL (PubMed:29373009). This keto acyclic precursor is the substrate of the Diels-Alderase ucsH, that catalyzes the Diels-Alder cycloaddition (PubMed:29373009). Oxidation of the 3S-methyl group to a carboxylate by the cytochrome P450 monooxygenase ucsK allows an oxa-Michael cyclization that might involve the reductase/dehydrogenase ucsI and which furnishes the furopyrrolizidine (PubMed:29373009). The oxidase ucsJ likely plays a critical role in stereoselective reduction of the C5-C6 double bond to afford the required R-configured carboxylate group (Probable). Further enolization and oxidation at C5 by an unidentified enzyme affords the last intermediate that can undergo oxa-Michael cyclization to yield UCS1025A (Probable).</text>
</comment>
<comment type="pathway">
    <text evidence="6">Mycotoxin biosynthesis.</text>
</comment>
<comment type="subunit">
    <text evidence="2">Homodimer.</text>
</comment>
<comment type="similarity">
    <text evidence="5">Belongs to the AB hydrolase superfamily. FUS2 hydrolase family.</text>
</comment>
<accession>A0A411KUP9</accession>
<organism>
    <name type="scientific">Acremonium sp</name>
    <dbReference type="NCBI Taxonomy" id="2046025"/>
    <lineage>
        <taxon>Eukaryota</taxon>
        <taxon>Fungi</taxon>
        <taxon>Dikarya</taxon>
        <taxon>Ascomycota</taxon>
        <taxon>Pezizomycotina</taxon>
        <taxon>Sordariomycetes</taxon>
        <taxon>Hypocreomycetidae</taxon>
        <taxon>Hypocreales</taxon>
        <taxon>Hypocreales incertae sedis</taxon>
        <taxon>Acremonium</taxon>
    </lineage>
</organism>
<proteinExistence type="inferred from homology"/>
<feature type="chain" id="PRO_0000450532" description="Alpha/beta hydrolase ucsC">
    <location>
        <begin position="1"/>
        <end position="492"/>
    </location>
</feature>
<feature type="active site" description="Nucleophile" evidence="1">
    <location>
        <position position="258"/>
    </location>
</feature>
<sequence>MYPFFTYSPGRHYFEYKWYNLELLRLIGSAPYGGCDAAEFLELVASLKPNDADEWHHKFLALAERTQAKGEQMSEAGHEAVARGAYLRASNYFRCAQYMFPIMPAARQGEFLKLYHRSIRSFEQAAELMEHRVERVSIPFQPPEYRAPAVELPGWLHLPAAHQRLSGRKTPLLICVGGADSTQEELYFLSAAEGPGLGYAILTFDGPGQGLTLRESGVPLRPDGEVVIEAVLDFIESYAAEHPEADLDVDAISITGQSLGGYLALRGAADPRIKACVAVDPIYDFYDLAMSRMPRWFMWPWERNYMGDGFVDFAVIEHSKLDVATKYTFAQGGQMFGSASPAQMIRDMKQYTFRLDKTITASKRHGNNRDYLEWVTCPVFVTGAAGDEKLFLPEMSTSAIMRNLANVPDEHKELWIPKEWSEGGAQAKSGAWPLLQHRCFKFLDEKLGISRGAKPVQLKTGFVKGVNGHGLTNGGLNGALNGATNGITNGVH</sequence>
<protein>
    <recommendedName>
        <fullName evidence="4">Alpha/beta hydrolase ucsC</fullName>
        <ecNumber evidence="6">3.7.1.-</ecNumber>
    </recommendedName>
    <alternativeName>
        <fullName evidence="4">UCS1025A pyrrolizidinone biosynthesis cluster protein C</fullName>
    </alternativeName>
</protein>
<keyword id="KW-0378">Hydrolase</keyword>